<gene>
    <name type="primary">gtaB</name>
    <name type="synonym">galU</name>
    <name type="ordered locus">SERP2056</name>
</gene>
<keyword id="KW-0119">Carbohydrate metabolism</keyword>
<keyword id="KW-0548">Nucleotidyltransferase</keyword>
<keyword id="KW-1185">Reference proteome</keyword>
<keyword id="KW-0808">Transferase</keyword>
<accession>Q5HLD1</accession>
<evidence type="ECO:0000250" key="1"/>
<evidence type="ECO:0000305" key="2"/>
<comment type="function">
    <text evidence="1">Catalyzes the formation of UDP-glucose from glucose-1-phosphate and UTP. This is an intermediate step in the biosynthesis of diglucosyl-diacylglycerol (Glc2-DAG), i.e. a glycolipid found in the membrane, which is also used as a membrane anchor for lipoteichoic acid (LTA) (By similarity).</text>
</comment>
<comment type="catalytic activity">
    <reaction>
        <text>alpha-D-glucose 1-phosphate + UTP + H(+) = UDP-alpha-D-glucose + diphosphate</text>
        <dbReference type="Rhea" id="RHEA:19889"/>
        <dbReference type="ChEBI" id="CHEBI:15378"/>
        <dbReference type="ChEBI" id="CHEBI:33019"/>
        <dbReference type="ChEBI" id="CHEBI:46398"/>
        <dbReference type="ChEBI" id="CHEBI:58601"/>
        <dbReference type="ChEBI" id="CHEBI:58885"/>
        <dbReference type="EC" id="2.7.7.9"/>
    </reaction>
</comment>
<comment type="pathway">
    <text>Glycolipid metabolism; diglucosyl-diacylglycerol biosynthesis.</text>
</comment>
<comment type="similarity">
    <text evidence="2">Belongs to the UDPGP type 2 family.</text>
</comment>
<reference key="1">
    <citation type="journal article" date="2005" name="J. Bacteriol.">
        <title>Insights on evolution of virulence and resistance from the complete genome analysis of an early methicillin-resistant Staphylococcus aureus strain and a biofilm-producing methicillin-resistant Staphylococcus epidermidis strain.</title>
        <authorList>
            <person name="Gill S.R."/>
            <person name="Fouts D.E."/>
            <person name="Archer G.L."/>
            <person name="Mongodin E.F."/>
            <person name="DeBoy R.T."/>
            <person name="Ravel J."/>
            <person name="Paulsen I.T."/>
            <person name="Kolonay J.F."/>
            <person name="Brinkac L.M."/>
            <person name="Beanan M.J."/>
            <person name="Dodson R.J."/>
            <person name="Daugherty S.C."/>
            <person name="Madupu R."/>
            <person name="Angiuoli S.V."/>
            <person name="Durkin A.S."/>
            <person name="Haft D.H."/>
            <person name="Vamathevan J.J."/>
            <person name="Khouri H."/>
            <person name="Utterback T.R."/>
            <person name="Lee C."/>
            <person name="Dimitrov G."/>
            <person name="Jiang L."/>
            <person name="Qin H."/>
            <person name="Weidman J."/>
            <person name="Tran K."/>
            <person name="Kang K.H."/>
            <person name="Hance I.R."/>
            <person name="Nelson K.E."/>
            <person name="Fraser C.M."/>
        </authorList>
    </citation>
    <scope>NUCLEOTIDE SEQUENCE [LARGE SCALE GENOMIC DNA]</scope>
    <source>
        <strain>ATCC 35984 / DSM 28319 / BCRC 17069 / CCUG 31568 / BM 3577 / RP62A</strain>
    </source>
</reference>
<protein>
    <recommendedName>
        <fullName>UTP--glucose-1-phosphate uridylyltransferase</fullName>
        <ecNumber>2.7.7.9</ecNumber>
    </recommendedName>
    <alternativeName>
        <fullName>Alpha-D-glucosyl-1-phosphate uridylyltransferase</fullName>
    </alternativeName>
    <alternativeName>
        <fullName>UDP-glucose pyrophosphorylase</fullName>
        <shortName>UDPGP</shortName>
    </alternativeName>
    <alternativeName>
        <fullName>Uridine diphosphoglucose pyrophosphorylase</fullName>
    </alternativeName>
</protein>
<organism>
    <name type="scientific">Staphylococcus epidermidis (strain ATCC 35984 / DSM 28319 / BCRC 17069 / CCUG 31568 / BM 3577 / RP62A)</name>
    <dbReference type="NCBI Taxonomy" id="176279"/>
    <lineage>
        <taxon>Bacteria</taxon>
        <taxon>Bacillati</taxon>
        <taxon>Bacillota</taxon>
        <taxon>Bacilli</taxon>
        <taxon>Bacillales</taxon>
        <taxon>Staphylococcaceae</taxon>
        <taxon>Staphylococcus</taxon>
    </lineage>
</organism>
<name>GTAB_STAEQ</name>
<dbReference type="EC" id="2.7.7.9"/>
<dbReference type="EMBL" id="CP000029">
    <property type="protein sequence ID" value="AAW52903.1"/>
    <property type="molecule type" value="Genomic_DNA"/>
</dbReference>
<dbReference type="RefSeq" id="WP_001831553.1">
    <property type="nucleotide sequence ID" value="NC_002976.3"/>
</dbReference>
<dbReference type="SMR" id="Q5HLD1"/>
<dbReference type="STRING" id="176279.SERP2056"/>
<dbReference type="KEGG" id="ser:SERP2056"/>
<dbReference type="eggNOG" id="COG1210">
    <property type="taxonomic scope" value="Bacteria"/>
</dbReference>
<dbReference type="HOGENOM" id="CLU_029499_1_2_9"/>
<dbReference type="UniPathway" id="UPA00894"/>
<dbReference type="Proteomes" id="UP000000531">
    <property type="component" value="Chromosome"/>
</dbReference>
<dbReference type="GO" id="GO:0003983">
    <property type="term" value="F:UTP:glucose-1-phosphate uridylyltransferase activity"/>
    <property type="evidence" value="ECO:0007669"/>
    <property type="project" value="UniProtKB-EC"/>
</dbReference>
<dbReference type="GO" id="GO:0009246">
    <property type="term" value="P:enterobacterial common antigen biosynthetic process"/>
    <property type="evidence" value="ECO:0007669"/>
    <property type="project" value="UniProtKB-UniPathway"/>
</dbReference>
<dbReference type="GO" id="GO:0006011">
    <property type="term" value="P:UDP-alpha-D-glucose metabolic process"/>
    <property type="evidence" value="ECO:0007669"/>
    <property type="project" value="InterPro"/>
</dbReference>
<dbReference type="CDD" id="cd02541">
    <property type="entry name" value="UGPase_prokaryotic"/>
    <property type="match status" value="1"/>
</dbReference>
<dbReference type="FunFam" id="3.90.550.10:FF:000045">
    <property type="entry name" value="UTP--glucose-1-phosphate uridylyltransferase"/>
    <property type="match status" value="1"/>
</dbReference>
<dbReference type="Gene3D" id="3.90.550.10">
    <property type="entry name" value="Spore Coat Polysaccharide Biosynthesis Protein SpsA, Chain A"/>
    <property type="match status" value="1"/>
</dbReference>
<dbReference type="InterPro" id="IPR005771">
    <property type="entry name" value="GalU_uridylyltTrfase_bac/arc"/>
</dbReference>
<dbReference type="InterPro" id="IPR005835">
    <property type="entry name" value="NTP_transferase_dom"/>
</dbReference>
<dbReference type="InterPro" id="IPR029044">
    <property type="entry name" value="Nucleotide-diphossugar_trans"/>
</dbReference>
<dbReference type="NCBIfam" id="TIGR01099">
    <property type="entry name" value="galU"/>
    <property type="match status" value="1"/>
</dbReference>
<dbReference type="PANTHER" id="PTHR43197">
    <property type="entry name" value="UTP--GLUCOSE-1-PHOSPHATE URIDYLYLTRANSFERASE"/>
    <property type="match status" value="1"/>
</dbReference>
<dbReference type="PANTHER" id="PTHR43197:SF1">
    <property type="entry name" value="UTP--GLUCOSE-1-PHOSPHATE URIDYLYLTRANSFERASE"/>
    <property type="match status" value="1"/>
</dbReference>
<dbReference type="Pfam" id="PF00483">
    <property type="entry name" value="NTP_transferase"/>
    <property type="match status" value="1"/>
</dbReference>
<dbReference type="SUPFAM" id="SSF53448">
    <property type="entry name" value="Nucleotide-diphospho-sugar transferases"/>
    <property type="match status" value="1"/>
</dbReference>
<feature type="chain" id="PRO_0000308310" description="UTP--glucose-1-phosphate uridylyltransferase">
    <location>
        <begin position="1"/>
        <end position="288"/>
    </location>
</feature>
<proteinExistence type="inferred from homology"/>
<sequence length="288" mass="32424">MKKIKKAIIPAAGLGTRFLPATKAMPKEMLPILDKPTIQYIVEEASKAGIEDIIIVTGKHKRAIEDHFDNQKELEMVLENKGKADLLEKVQYSTDLANIFYVRQKEQKGLGHAIHTAKQFIGNEPFAVLLGDDIVESDTPAIKQLMDVYEETGHSVIGVQEVPESDTHRYGVIDPSAKEGSRYEVRQFVEKPKQGTAPSNLAIMGRYVLTPEIFDYLETQQEGAGNEIQLTDAIERMNSKQQVYAYDFEGNRYDVGEKLGFVKTTIEYALKDPEMSQDLKAFIKQLDI</sequence>